<reference key="1">
    <citation type="journal article" date="2002" name="Lancet">
        <title>Genome and virulence determinants of high virulence community-acquired MRSA.</title>
        <authorList>
            <person name="Baba T."/>
            <person name="Takeuchi F."/>
            <person name="Kuroda M."/>
            <person name="Yuzawa H."/>
            <person name="Aoki K."/>
            <person name="Oguchi A."/>
            <person name="Nagai Y."/>
            <person name="Iwama N."/>
            <person name="Asano K."/>
            <person name="Naimi T."/>
            <person name="Kuroda H."/>
            <person name="Cui L."/>
            <person name="Yamamoto K."/>
            <person name="Hiramatsu K."/>
        </authorList>
    </citation>
    <scope>NUCLEOTIDE SEQUENCE [LARGE SCALE GENOMIC DNA]</scope>
    <source>
        <strain>MW2</strain>
    </source>
</reference>
<dbReference type="EC" id="5.1.1.3" evidence="1"/>
<dbReference type="EMBL" id="BA000033">
    <property type="protein sequence ID" value="BAB94898.1"/>
    <property type="molecule type" value="Genomic_DNA"/>
</dbReference>
<dbReference type="SMR" id="P63639"/>
<dbReference type="KEGG" id="sam:MW1033"/>
<dbReference type="HOGENOM" id="CLU_052344_0_2_9"/>
<dbReference type="UniPathway" id="UPA00219"/>
<dbReference type="GO" id="GO:0008881">
    <property type="term" value="F:glutamate racemase activity"/>
    <property type="evidence" value="ECO:0007669"/>
    <property type="project" value="UniProtKB-UniRule"/>
</dbReference>
<dbReference type="GO" id="GO:0071555">
    <property type="term" value="P:cell wall organization"/>
    <property type="evidence" value="ECO:0007669"/>
    <property type="project" value="UniProtKB-KW"/>
</dbReference>
<dbReference type="GO" id="GO:0009252">
    <property type="term" value="P:peptidoglycan biosynthetic process"/>
    <property type="evidence" value="ECO:0007669"/>
    <property type="project" value="UniProtKB-UniRule"/>
</dbReference>
<dbReference type="GO" id="GO:0008360">
    <property type="term" value="P:regulation of cell shape"/>
    <property type="evidence" value="ECO:0007669"/>
    <property type="project" value="UniProtKB-KW"/>
</dbReference>
<dbReference type="FunFam" id="3.40.50.1860:FF:000002">
    <property type="entry name" value="Glutamate racemase"/>
    <property type="match status" value="1"/>
</dbReference>
<dbReference type="Gene3D" id="3.40.50.1860">
    <property type="match status" value="2"/>
</dbReference>
<dbReference type="HAMAP" id="MF_00258">
    <property type="entry name" value="Glu_racemase"/>
    <property type="match status" value="1"/>
</dbReference>
<dbReference type="InterPro" id="IPR015942">
    <property type="entry name" value="Asp/Glu/hydantoin_racemase"/>
</dbReference>
<dbReference type="InterPro" id="IPR001920">
    <property type="entry name" value="Asp/Glu_race"/>
</dbReference>
<dbReference type="InterPro" id="IPR018187">
    <property type="entry name" value="Asp/Glu_racemase_AS_1"/>
</dbReference>
<dbReference type="InterPro" id="IPR033134">
    <property type="entry name" value="Asp/Glu_racemase_AS_2"/>
</dbReference>
<dbReference type="InterPro" id="IPR004391">
    <property type="entry name" value="Glu_race"/>
</dbReference>
<dbReference type="NCBIfam" id="TIGR00067">
    <property type="entry name" value="glut_race"/>
    <property type="match status" value="1"/>
</dbReference>
<dbReference type="NCBIfam" id="NF002035">
    <property type="entry name" value="PRK00865.1-3"/>
    <property type="match status" value="1"/>
</dbReference>
<dbReference type="PANTHER" id="PTHR21198">
    <property type="entry name" value="GLUTAMATE RACEMASE"/>
    <property type="match status" value="1"/>
</dbReference>
<dbReference type="PANTHER" id="PTHR21198:SF2">
    <property type="entry name" value="GLUTAMATE RACEMASE"/>
    <property type="match status" value="1"/>
</dbReference>
<dbReference type="Pfam" id="PF01177">
    <property type="entry name" value="Asp_Glu_race"/>
    <property type="match status" value="1"/>
</dbReference>
<dbReference type="SUPFAM" id="SSF53681">
    <property type="entry name" value="Aspartate/glutamate racemase"/>
    <property type="match status" value="2"/>
</dbReference>
<dbReference type="PROSITE" id="PS00923">
    <property type="entry name" value="ASP_GLU_RACEMASE_1"/>
    <property type="match status" value="1"/>
</dbReference>
<dbReference type="PROSITE" id="PS00924">
    <property type="entry name" value="ASP_GLU_RACEMASE_2"/>
    <property type="match status" value="1"/>
</dbReference>
<organism>
    <name type="scientific">Staphylococcus aureus (strain MW2)</name>
    <dbReference type="NCBI Taxonomy" id="196620"/>
    <lineage>
        <taxon>Bacteria</taxon>
        <taxon>Bacillati</taxon>
        <taxon>Bacillota</taxon>
        <taxon>Bacilli</taxon>
        <taxon>Bacillales</taxon>
        <taxon>Staphylococcaceae</taxon>
        <taxon>Staphylococcus</taxon>
    </lineage>
</organism>
<keyword id="KW-0133">Cell shape</keyword>
<keyword id="KW-0961">Cell wall biogenesis/degradation</keyword>
<keyword id="KW-0413">Isomerase</keyword>
<keyword id="KW-0573">Peptidoglycan synthesis</keyword>
<proteinExistence type="inferred from homology"/>
<name>MURI_STAAW</name>
<gene>
    <name evidence="1" type="primary">murI</name>
    <name type="ordered locus">MW1033</name>
</gene>
<protein>
    <recommendedName>
        <fullName evidence="1">Glutamate racemase</fullName>
        <ecNumber evidence="1">5.1.1.3</ecNumber>
    </recommendedName>
</protein>
<evidence type="ECO:0000255" key="1">
    <source>
        <dbReference type="HAMAP-Rule" id="MF_00258"/>
    </source>
</evidence>
<accession>P63639</accession>
<accession>Q99UV6</accession>
<comment type="function">
    <text evidence="1">Provides the (R)-glutamate required for cell wall biosynthesis.</text>
</comment>
<comment type="catalytic activity">
    <reaction evidence="1">
        <text>L-glutamate = D-glutamate</text>
        <dbReference type="Rhea" id="RHEA:12813"/>
        <dbReference type="ChEBI" id="CHEBI:29985"/>
        <dbReference type="ChEBI" id="CHEBI:29986"/>
        <dbReference type="EC" id="5.1.1.3"/>
    </reaction>
</comment>
<comment type="pathway">
    <text evidence="1">Cell wall biogenesis; peptidoglycan biosynthesis.</text>
</comment>
<comment type="similarity">
    <text evidence="1">Belongs to the aspartate/glutamate racemases family.</text>
</comment>
<sequence>MNKPIGVIDSGVGGLTVAKEIMRQLPNETIYYLGDIGRCPYGPRPGEQVKQYTVEIARKLMEFDIKMLVIACNTATAVALEYLQKTLSIPVIGVIEPGARTAIMTTRNQNVLVLGTEGTIKSEAYRTHIKRINPHVEVHGVACPGFVPLVEQMRYSDPTITSIVIHQTLKRWRNSESDTVILGCTHYPLLYKPIYDYFGGKKTVISSGLETAREVSALLTFSNEHASYTEHPDHRFFATGDPTHITNIIKEWLNLSVNVERISVND</sequence>
<feature type="chain" id="PRO_0000095512" description="Glutamate racemase">
    <location>
        <begin position="1"/>
        <end position="266"/>
    </location>
</feature>
<feature type="active site" description="Proton donor/acceptor" evidence="1">
    <location>
        <position position="72"/>
    </location>
</feature>
<feature type="active site" description="Proton donor/acceptor" evidence="1">
    <location>
        <position position="184"/>
    </location>
</feature>
<feature type="binding site" evidence="1">
    <location>
        <begin position="9"/>
        <end position="10"/>
    </location>
    <ligand>
        <name>substrate</name>
    </ligand>
</feature>
<feature type="binding site" evidence="1">
    <location>
        <begin position="41"/>
        <end position="42"/>
    </location>
    <ligand>
        <name>substrate</name>
    </ligand>
</feature>
<feature type="binding site" evidence="1">
    <location>
        <begin position="73"/>
        <end position="74"/>
    </location>
    <ligand>
        <name>substrate</name>
    </ligand>
</feature>
<feature type="binding site" evidence="1">
    <location>
        <begin position="185"/>
        <end position="186"/>
    </location>
    <ligand>
        <name>substrate</name>
    </ligand>
</feature>